<comment type="function">
    <text evidence="1">Essential cell division protein. May link together the upstream cell division proteins, which are predominantly cytoplasmic, with the downstream cell division proteins, which are predominantly periplasmic.</text>
</comment>
<comment type="subunit">
    <text evidence="1">Part of a complex composed of FtsB, FtsL and FtsQ.</text>
</comment>
<comment type="subcellular location">
    <subcellularLocation>
        <location evidence="1">Cell inner membrane</location>
        <topology evidence="1">Single-pass type II membrane protein</topology>
    </subcellularLocation>
    <text evidence="1">Localizes to the division septum.</text>
</comment>
<comment type="similarity">
    <text evidence="1">Belongs to the FtsB family.</text>
</comment>
<name>FTSB_XYLFM</name>
<dbReference type="EMBL" id="CP000941">
    <property type="protein sequence ID" value="ACA11621.1"/>
    <property type="molecule type" value="Genomic_DNA"/>
</dbReference>
<dbReference type="RefSeq" id="WP_004084008.1">
    <property type="nucleotide sequence ID" value="NC_010513.1"/>
</dbReference>
<dbReference type="SMR" id="B0U659"/>
<dbReference type="KEGG" id="xfm:Xfasm12_0617"/>
<dbReference type="HOGENOM" id="CLU_134863_5_1_6"/>
<dbReference type="GO" id="GO:0032153">
    <property type="term" value="C:cell division site"/>
    <property type="evidence" value="ECO:0007669"/>
    <property type="project" value="UniProtKB-UniRule"/>
</dbReference>
<dbReference type="GO" id="GO:0030428">
    <property type="term" value="C:cell septum"/>
    <property type="evidence" value="ECO:0007669"/>
    <property type="project" value="TreeGrafter"/>
</dbReference>
<dbReference type="GO" id="GO:0005886">
    <property type="term" value="C:plasma membrane"/>
    <property type="evidence" value="ECO:0007669"/>
    <property type="project" value="UniProtKB-SubCell"/>
</dbReference>
<dbReference type="GO" id="GO:0043093">
    <property type="term" value="P:FtsZ-dependent cytokinesis"/>
    <property type="evidence" value="ECO:0007669"/>
    <property type="project" value="UniProtKB-UniRule"/>
</dbReference>
<dbReference type="HAMAP" id="MF_00599">
    <property type="entry name" value="FtsB"/>
    <property type="match status" value="1"/>
</dbReference>
<dbReference type="InterPro" id="IPR023081">
    <property type="entry name" value="Cell_div_FtsB"/>
</dbReference>
<dbReference type="InterPro" id="IPR007060">
    <property type="entry name" value="FtsL/DivIC"/>
</dbReference>
<dbReference type="NCBIfam" id="NF002058">
    <property type="entry name" value="PRK00888.1"/>
    <property type="match status" value="1"/>
</dbReference>
<dbReference type="PANTHER" id="PTHR37485">
    <property type="entry name" value="CELL DIVISION PROTEIN FTSB"/>
    <property type="match status" value="1"/>
</dbReference>
<dbReference type="PANTHER" id="PTHR37485:SF1">
    <property type="entry name" value="CELL DIVISION PROTEIN FTSB"/>
    <property type="match status" value="1"/>
</dbReference>
<dbReference type="Pfam" id="PF04977">
    <property type="entry name" value="DivIC"/>
    <property type="match status" value="1"/>
</dbReference>
<gene>
    <name evidence="1" type="primary">ftsB</name>
    <name type="ordered locus">Xfasm12_0617</name>
</gene>
<evidence type="ECO:0000255" key="1">
    <source>
        <dbReference type="HAMAP-Rule" id="MF_00599"/>
    </source>
</evidence>
<evidence type="ECO:0000256" key="2">
    <source>
        <dbReference type="SAM" id="MobiDB-lite"/>
    </source>
</evidence>
<organism>
    <name type="scientific">Xylella fastidiosa (strain M12)</name>
    <dbReference type="NCBI Taxonomy" id="405440"/>
    <lineage>
        <taxon>Bacteria</taxon>
        <taxon>Pseudomonadati</taxon>
        <taxon>Pseudomonadota</taxon>
        <taxon>Gammaproteobacteria</taxon>
        <taxon>Lysobacterales</taxon>
        <taxon>Lysobacteraceae</taxon>
        <taxon>Xylella</taxon>
    </lineage>
</organism>
<reference key="1">
    <citation type="journal article" date="2010" name="J. Bacteriol.">
        <title>Whole genome sequences of two Xylella fastidiosa strains (M12 and M23) causing almond leaf scorch disease in California.</title>
        <authorList>
            <person name="Chen J."/>
            <person name="Xie G."/>
            <person name="Han S."/>
            <person name="Chertkov O."/>
            <person name="Sims D."/>
            <person name="Civerolo E.L."/>
        </authorList>
    </citation>
    <scope>NUCLEOTIDE SEQUENCE [LARGE SCALE GENOMIC DNA]</scope>
    <source>
        <strain>M12</strain>
    </source>
</reference>
<protein>
    <recommendedName>
        <fullName evidence="1">Cell division protein FtsB</fullName>
    </recommendedName>
</protein>
<keyword id="KW-0131">Cell cycle</keyword>
<keyword id="KW-0132">Cell division</keyword>
<keyword id="KW-0997">Cell inner membrane</keyword>
<keyword id="KW-1003">Cell membrane</keyword>
<keyword id="KW-0175">Coiled coil</keyword>
<keyword id="KW-0472">Membrane</keyword>
<keyword id="KW-0812">Transmembrane</keyword>
<keyword id="KW-1133">Transmembrane helix</keyword>
<feature type="chain" id="PRO_1000129952" description="Cell division protein FtsB">
    <location>
        <begin position="1"/>
        <end position="118"/>
    </location>
</feature>
<feature type="topological domain" description="Cytoplasmic" evidence="1">
    <location>
        <begin position="1"/>
        <end position="6"/>
    </location>
</feature>
<feature type="transmembrane region" description="Helical" evidence="1">
    <location>
        <begin position="7"/>
        <end position="24"/>
    </location>
</feature>
<feature type="topological domain" description="Periplasmic" evidence="1">
    <location>
        <begin position="25"/>
        <end position="118"/>
    </location>
</feature>
<feature type="region of interest" description="Disordered" evidence="2">
    <location>
        <begin position="98"/>
        <end position="118"/>
    </location>
</feature>
<feature type="coiled-coil region" evidence="1">
    <location>
        <begin position="30"/>
        <end position="66"/>
    </location>
</feature>
<feature type="compositionally biased region" description="Basic and acidic residues" evidence="2">
    <location>
        <begin position="103"/>
        <end position="118"/>
    </location>
</feature>
<accession>B0U659</accession>
<proteinExistence type="inferred from homology"/>
<sequence length="118" mass="13651">MRNWRWLLLVLAALLAWLQHRFWFGPGNSGEVRMLQVQIVQQHQENERLRQRNASLAAEVKNLKDGDAAIEERARSELGMIKPGEIFYRVVEDIPAPLPNDTSADHGVDLSQPRREKR</sequence>